<protein>
    <recommendedName>
        <fullName evidence="1">Anhydro-N-acetylmuramic acid kinase</fullName>
        <ecNumber evidence="1">2.7.1.170</ecNumber>
    </recommendedName>
    <alternativeName>
        <fullName evidence="1">AnhMurNAc kinase</fullName>
    </alternativeName>
</protein>
<proteinExistence type="inferred from homology"/>
<organism>
    <name type="scientific">Prochlorococcus marinus (strain MIT 9313)</name>
    <dbReference type="NCBI Taxonomy" id="74547"/>
    <lineage>
        <taxon>Bacteria</taxon>
        <taxon>Bacillati</taxon>
        <taxon>Cyanobacteriota</taxon>
        <taxon>Cyanophyceae</taxon>
        <taxon>Synechococcales</taxon>
        <taxon>Prochlorococcaceae</taxon>
        <taxon>Prochlorococcus</taxon>
    </lineage>
</organism>
<sequence>MRVLGLMSGTSADGVDAVLAEFSGSPSEPKWSLLNLVCIPYPEDLRQTVVNAGQGIKLNSCEWLELSESITEVHAQAALACDPRAQAELVGSHGQTVWHRPPQKNHRGASWQILQAPLLAELLKRPVVHDFRAADLALGGQGAPLVPMADAALLGRVGGWRGVLNLGGIANLTLIPPRSGPDRLASVMGWDCGPANSLIDLAVEQISKGKLAFDHDGIIAASGHPHTTTIERWLKETFFQLPPPKSTGREQFGLADLEQRLKELPKMSRANRVATLTAFSAAVVAQDLDNLHLRNLVRPLELIVAGGGSRNPVLMNELRQRCRGMRLLNSDELGLSAEAREGLAFALLAWWHCLQYPGNAPAITGAKRAAVLGVRADPA</sequence>
<dbReference type="EC" id="2.7.1.170" evidence="1"/>
<dbReference type="EMBL" id="BX548175">
    <property type="protein sequence ID" value="CAE21805.1"/>
    <property type="molecule type" value="Genomic_DNA"/>
</dbReference>
<dbReference type="RefSeq" id="WP_011130997.1">
    <property type="nucleotide sequence ID" value="NC_005071.1"/>
</dbReference>
<dbReference type="SMR" id="Q7V5D4"/>
<dbReference type="KEGG" id="pmt:PMT_1630"/>
<dbReference type="eggNOG" id="COG2377">
    <property type="taxonomic scope" value="Bacteria"/>
</dbReference>
<dbReference type="HOGENOM" id="CLU_038782_1_0_3"/>
<dbReference type="OrthoDB" id="9763949at2"/>
<dbReference type="UniPathway" id="UPA00343"/>
<dbReference type="UniPathway" id="UPA00544"/>
<dbReference type="Proteomes" id="UP000001423">
    <property type="component" value="Chromosome"/>
</dbReference>
<dbReference type="GO" id="GO:0005524">
    <property type="term" value="F:ATP binding"/>
    <property type="evidence" value="ECO:0007669"/>
    <property type="project" value="UniProtKB-UniRule"/>
</dbReference>
<dbReference type="GO" id="GO:0016301">
    <property type="term" value="F:kinase activity"/>
    <property type="evidence" value="ECO:0007669"/>
    <property type="project" value="UniProtKB-KW"/>
</dbReference>
<dbReference type="GO" id="GO:0016773">
    <property type="term" value="F:phosphotransferase activity, alcohol group as acceptor"/>
    <property type="evidence" value="ECO:0007669"/>
    <property type="project" value="UniProtKB-UniRule"/>
</dbReference>
<dbReference type="GO" id="GO:0097175">
    <property type="term" value="P:1,6-anhydro-N-acetyl-beta-muramic acid catabolic process"/>
    <property type="evidence" value="ECO:0007669"/>
    <property type="project" value="UniProtKB-UniRule"/>
</dbReference>
<dbReference type="GO" id="GO:0006040">
    <property type="term" value="P:amino sugar metabolic process"/>
    <property type="evidence" value="ECO:0007669"/>
    <property type="project" value="InterPro"/>
</dbReference>
<dbReference type="GO" id="GO:0009254">
    <property type="term" value="P:peptidoglycan turnover"/>
    <property type="evidence" value="ECO:0007669"/>
    <property type="project" value="UniProtKB-UniRule"/>
</dbReference>
<dbReference type="CDD" id="cd24050">
    <property type="entry name" value="ASKHA_NBD_ANMK"/>
    <property type="match status" value="1"/>
</dbReference>
<dbReference type="Gene3D" id="3.30.420.40">
    <property type="match status" value="2"/>
</dbReference>
<dbReference type="HAMAP" id="MF_01270">
    <property type="entry name" value="AnhMurNAc_kinase"/>
    <property type="match status" value="1"/>
</dbReference>
<dbReference type="InterPro" id="IPR005338">
    <property type="entry name" value="Anhydro_N_Ac-Mur_kinase"/>
</dbReference>
<dbReference type="InterPro" id="IPR043129">
    <property type="entry name" value="ATPase_NBD"/>
</dbReference>
<dbReference type="NCBIfam" id="NF007145">
    <property type="entry name" value="PRK09585.2-5"/>
    <property type="match status" value="1"/>
</dbReference>
<dbReference type="PANTHER" id="PTHR30605">
    <property type="entry name" value="ANHYDRO-N-ACETYLMURAMIC ACID KINASE"/>
    <property type="match status" value="1"/>
</dbReference>
<dbReference type="PANTHER" id="PTHR30605:SF0">
    <property type="entry name" value="ANHYDRO-N-ACETYLMURAMIC ACID KINASE"/>
    <property type="match status" value="1"/>
</dbReference>
<dbReference type="Pfam" id="PF03702">
    <property type="entry name" value="AnmK"/>
    <property type="match status" value="1"/>
</dbReference>
<dbReference type="SUPFAM" id="SSF53067">
    <property type="entry name" value="Actin-like ATPase domain"/>
    <property type="match status" value="1"/>
</dbReference>
<gene>
    <name evidence="1" type="primary">anmK</name>
    <name type="ordered locus">PMT_1630</name>
</gene>
<name>ANMK_PROMM</name>
<feature type="chain" id="PRO_0000250025" description="Anhydro-N-acetylmuramic acid kinase">
    <location>
        <begin position="1"/>
        <end position="379"/>
    </location>
</feature>
<feature type="binding site" evidence="1">
    <location>
        <begin position="9"/>
        <end position="16"/>
    </location>
    <ligand>
        <name>ATP</name>
        <dbReference type="ChEBI" id="CHEBI:30616"/>
    </ligand>
</feature>
<reference key="1">
    <citation type="journal article" date="2003" name="Nature">
        <title>Genome divergence in two Prochlorococcus ecotypes reflects oceanic niche differentiation.</title>
        <authorList>
            <person name="Rocap G."/>
            <person name="Larimer F.W."/>
            <person name="Lamerdin J.E."/>
            <person name="Malfatti S."/>
            <person name="Chain P."/>
            <person name="Ahlgren N.A."/>
            <person name="Arellano A."/>
            <person name="Coleman M."/>
            <person name="Hauser L."/>
            <person name="Hess W.R."/>
            <person name="Johnson Z.I."/>
            <person name="Land M.L."/>
            <person name="Lindell D."/>
            <person name="Post A.F."/>
            <person name="Regala W."/>
            <person name="Shah M."/>
            <person name="Shaw S.L."/>
            <person name="Steglich C."/>
            <person name="Sullivan M.B."/>
            <person name="Ting C.S."/>
            <person name="Tolonen A."/>
            <person name="Webb E.A."/>
            <person name="Zinser E.R."/>
            <person name="Chisholm S.W."/>
        </authorList>
    </citation>
    <scope>NUCLEOTIDE SEQUENCE [LARGE SCALE GENOMIC DNA]</scope>
    <source>
        <strain>MIT 9313</strain>
    </source>
</reference>
<comment type="function">
    <text evidence="1">Catalyzes the specific phosphorylation of 1,6-anhydro-N-acetylmuramic acid (anhMurNAc) with the simultaneous cleavage of the 1,6-anhydro ring, generating MurNAc-6-P. Is required for the utilization of anhMurNAc either imported from the medium or derived from its own cell wall murein, and thus plays a role in cell wall recycling.</text>
</comment>
<comment type="catalytic activity">
    <reaction evidence="1">
        <text>1,6-anhydro-N-acetyl-beta-muramate + ATP + H2O = N-acetyl-D-muramate 6-phosphate + ADP + H(+)</text>
        <dbReference type="Rhea" id="RHEA:24952"/>
        <dbReference type="ChEBI" id="CHEBI:15377"/>
        <dbReference type="ChEBI" id="CHEBI:15378"/>
        <dbReference type="ChEBI" id="CHEBI:30616"/>
        <dbReference type="ChEBI" id="CHEBI:58690"/>
        <dbReference type="ChEBI" id="CHEBI:58722"/>
        <dbReference type="ChEBI" id="CHEBI:456216"/>
        <dbReference type="EC" id="2.7.1.170"/>
    </reaction>
</comment>
<comment type="pathway">
    <text evidence="1">Amino-sugar metabolism; 1,6-anhydro-N-acetylmuramate degradation.</text>
</comment>
<comment type="pathway">
    <text evidence="1">Cell wall biogenesis; peptidoglycan recycling.</text>
</comment>
<comment type="similarity">
    <text evidence="1">Belongs to the anhydro-N-acetylmuramic acid kinase family.</text>
</comment>
<accession>Q7V5D4</accession>
<evidence type="ECO:0000255" key="1">
    <source>
        <dbReference type="HAMAP-Rule" id="MF_01270"/>
    </source>
</evidence>
<keyword id="KW-0067">ATP-binding</keyword>
<keyword id="KW-0119">Carbohydrate metabolism</keyword>
<keyword id="KW-0418">Kinase</keyword>
<keyword id="KW-0547">Nucleotide-binding</keyword>
<keyword id="KW-1185">Reference proteome</keyword>
<keyword id="KW-0808">Transferase</keyword>